<name>IVD_SOLTU</name>
<evidence type="ECO:0000250" key="1">
    <source>
        <dbReference type="UniProtKB" id="P26440"/>
    </source>
</evidence>
<evidence type="ECO:0000269" key="2">
    <source>
    </source>
</evidence>
<evidence type="ECO:0000269" key="3">
    <source>
    </source>
</evidence>
<evidence type="ECO:0000305" key="4"/>
<evidence type="ECO:0000305" key="5">
    <source>
    </source>
</evidence>
<protein>
    <recommendedName>
        <fullName>Isovaleryl-CoA dehydrogenase, mitochondrial</fullName>
        <shortName>IVD</shortName>
        <ecNumber>1.3.8.4</ecNumber>
    </recommendedName>
    <alternativeName>
        <fullName>Isovaleryl-CoA dehydrogenase 2</fullName>
        <shortName>St-IVD2</shortName>
    </alternativeName>
</protein>
<keyword id="KW-0903">Direct protein sequencing</keyword>
<keyword id="KW-0274">FAD</keyword>
<keyword id="KW-0285">Flavoprotein</keyword>
<keyword id="KW-0496">Mitochondrion</keyword>
<keyword id="KW-0560">Oxidoreductase</keyword>
<keyword id="KW-1185">Reference proteome</keyword>
<keyword id="KW-0809">Transit peptide</keyword>
<dbReference type="EC" id="1.3.8.4"/>
<dbReference type="EMBL" id="AJ278988">
    <property type="protein sequence ID" value="CAC08234.1"/>
    <property type="molecule type" value="mRNA"/>
</dbReference>
<dbReference type="RefSeq" id="XP_006340144.1">
    <property type="nucleotide sequence ID" value="XM_006340082.2"/>
</dbReference>
<dbReference type="SMR" id="Q9FS87"/>
<dbReference type="FunCoup" id="Q9FS87">
    <property type="interactions" value="2288"/>
</dbReference>
<dbReference type="IntAct" id="Q9FS87">
    <property type="interactions" value="1"/>
</dbReference>
<dbReference type="STRING" id="4113.Q9FS87"/>
<dbReference type="PaxDb" id="4113-PGSC0003DMT400020955"/>
<dbReference type="EnsemblPlants" id="PGSC0003DMT400020955">
    <property type="protein sequence ID" value="PGSC0003DMT400020955"/>
    <property type="gene ID" value="PGSC0003DMG400008113"/>
</dbReference>
<dbReference type="GeneID" id="102601763"/>
<dbReference type="Gramene" id="PGSC0003DMT400020955">
    <property type="protein sequence ID" value="PGSC0003DMT400020955"/>
    <property type="gene ID" value="PGSC0003DMG400008113"/>
</dbReference>
<dbReference type="KEGG" id="sot:102601763"/>
<dbReference type="eggNOG" id="KOG0141">
    <property type="taxonomic scope" value="Eukaryota"/>
</dbReference>
<dbReference type="HOGENOM" id="CLU_018204_0_1_1"/>
<dbReference type="InParanoid" id="Q9FS87"/>
<dbReference type="OMA" id="CFITNSG"/>
<dbReference type="OrthoDB" id="9988775at2759"/>
<dbReference type="BRENDA" id="1.3.8.4">
    <property type="organism ID" value="5757"/>
</dbReference>
<dbReference type="SABIO-RK" id="Q9FS87"/>
<dbReference type="UniPathway" id="UPA00363">
    <property type="reaction ID" value="UER00860"/>
</dbReference>
<dbReference type="Proteomes" id="UP000011115">
    <property type="component" value="Unassembled WGS sequence"/>
</dbReference>
<dbReference type="ExpressionAtlas" id="Q9FS87">
    <property type="expression patterns" value="baseline"/>
</dbReference>
<dbReference type="GO" id="GO:0005739">
    <property type="term" value="C:mitochondrion"/>
    <property type="evidence" value="ECO:0000318"/>
    <property type="project" value="GO_Central"/>
</dbReference>
<dbReference type="GO" id="GO:0008470">
    <property type="term" value="F:3-methylbutanoyl-CoA dehydrogenase activity"/>
    <property type="evidence" value="ECO:0000314"/>
    <property type="project" value="UniProtKB"/>
</dbReference>
<dbReference type="GO" id="GO:0050660">
    <property type="term" value="F:flavin adenine dinucleotide binding"/>
    <property type="evidence" value="ECO:0007669"/>
    <property type="project" value="InterPro"/>
</dbReference>
<dbReference type="GO" id="GO:1902198">
    <property type="term" value="P:3-methylbut-2-enoyl-CoA(4-) metabolic process"/>
    <property type="evidence" value="ECO:0000314"/>
    <property type="project" value="UniProtKB"/>
</dbReference>
<dbReference type="GO" id="GO:1902196">
    <property type="term" value="P:isovaleryl-CoA(4-) catabolic process"/>
    <property type="evidence" value="ECO:0000314"/>
    <property type="project" value="UniProtKB"/>
</dbReference>
<dbReference type="GO" id="GO:0006552">
    <property type="term" value="P:L-leucine catabolic process"/>
    <property type="evidence" value="ECO:0000318"/>
    <property type="project" value="GO_Central"/>
</dbReference>
<dbReference type="CDD" id="cd01156">
    <property type="entry name" value="IVD"/>
    <property type="match status" value="1"/>
</dbReference>
<dbReference type="FunFam" id="1.10.540.10:FF:000007">
    <property type="entry name" value="Isovaleryl-CoA dehydrogenase, mitochondrial"/>
    <property type="match status" value="1"/>
</dbReference>
<dbReference type="FunFam" id="2.40.110.10:FF:000004">
    <property type="entry name" value="Isovaleryl-CoA dehydrogenase, mitochondrial"/>
    <property type="match status" value="1"/>
</dbReference>
<dbReference type="FunFam" id="1.20.140.10:FF:000003">
    <property type="entry name" value="isovaleryl-CoA dehydrogenase, mitochondrial"/>
    <property type="match status" value="1"/>
</dbReference>
<dbReference type="Gene3D" id="1.10.540.10">
    <property type="entry name" value="Acyl-CoA dehydrogenase/oxidase, N-terminal domain"/>
    <property type="match status" value="1"/>
</dbReference>
<dbReference type="Gene3D" id="2.40.110.10">
    <property type="entry name" value="Butyryl-CoA Dehydrogenase, subunit A, domain 2"/>
    <property type="match status" value="1"/>
</dbReference>
<dbReference type="Gene3D" id="1.20.140.10">
    <property type="entry name" value="Butyryl-CoA Dehydrogenase, subunit A, domain 3"/>
    <property type="match status" value="1"/>
</dbReference>
<dbReference type="InterPro" id="IPR006089">
    <property type="entry name" value="Acyl-CoA_DH_CS"/>
</dbReference>
<dbReference type="InterPro" id="IPR006091">
    <property type="entry name" value="Acyl-CoA_Oxase/DH_mid-dom"/>
</dbReference>
<dbReference type="InterPro" id="IPR046373">
    <property type="entry name" value="Acyl-CoA_Oxase/DH_mid-dom_sf"/>
</dbReference>
<dbReference type="InterPro" id="IPR036250">
    <property type="entry name" value="AcylCo_DH-like_C"/>
</dbReference>
<dbReference type="InterPro" id="IPR009075">
    <property type="entry name" value="AcylCo_DH/oxidase_C"/>
</dbReference>
<dbReference type="InterPro" id="IPR013786">
    <property type="entry name" value="AcylCoA_DH/ox_N"/>
</dbReference>
<dbReference type="InterPro" id="IPR037069">
    <property type="entry name" value="AcylCoA_DH/ox_N_sf"/>
</dbReference>
<dbReference type="InterPro" id="IPR009100">
    <property type="entry name" value="AcylCoA_DH/oxidase_NM_dom_sf"/>
</dbReference>
<dbReference type="InterPro" id="IPR034183">
    <property type="entry name" value="IVD"/>
</dbReference>
<dbReference type="PANTHER" id="PTHR43884">
    <property type="entry name" value="ACYL-COA DEHYDROGENASE"/>
    <property type="match status" value="1"/>
</dbReference>
<dbReference type="PANTHER" id="PTHR43884:SF12">
    <property type="entry name" value="ISOVALERYL-COA DEHYDROGENASE, MITOCHONDRIAL-RELATED"/>
    <property type="match status" value="1"/>
</dbReference>
<dbReference type="Pfam" id="PF00441">
    <property type="entry name" value="Acyl-CoA_dh_1"/>
    <property type="match status" value="1"/>
</dbReference>
<dbReference type="Pfam" id="PF02770">
    <property type="entry name" value="Acyl-CoA_dh_M"/>
    <property type="match status" value="1"/>
</dbReference>
<dbReference type="Pfam" id="PF02771">
    <property type="entry name" value="Acyl-CoA_dh_N"/>
    <property type="match status" value="1"/>
</dbReference>
<dbReference type="PIRSF" id="PIRSF016578">
    <property type="entry name" value="HsaA"/>
    <property type="match status" value="1"/>
</dbReference>
<dbReference type="SUPFAM" id="SSF47203">
    <property type="entry name" value="Acyl-CoA dehydrogenase C-terminal domain-like"/>
    <property type="match status" value="1"/>
</dbReference>
<dbReference type="SUPFAM" id="SSF56645">
    <property type="entry name" value="Acyl-CoA dehydrogenase NM domain-like"/>
    <property type="match status" value="1"/>
</dbReference>
<dbReference type="PROSITE" id="PS00072">
    <property type="entry name" value="ACYL_COA_DH_1"/>
    <property type="match status" value="1"/>
</dbReference>
<dbReference type="PROSITE" id="PS00073">
    <property type="entry name" value="ACYL_COA_DH_2"/>
    <property type="match status" value="1"/>
</dbReference>
<feature type="transit peptide" description="Mitochondrion" evidence="4">
    <location>
        <begin position="1"/>
        <end position="25"/>
    </location>
</feature>
<feature type="chain" id="PRO_0000000537" description="Isovaleryl-CoA dehydrogenase, mitochondrial">
    <location>
        <begin position="26"/>
        <end position="412"/>
    </location>
</feature>
<feature type="active site" description="Proton acceptor" evidence="1">
    <location>
        <position position="273"/>
    </location>
</feature>
<feature type="binding site" evidence="1">
    <location>
        <begin position="154"/>
        <end position="163"/>
    </location>
    <ligand>
        <name>FAD</name>
        <dbReference type="ChEBI" id="CHEBI:57692"/>
    </ligand>
</feature>
<feature type="binding site" evidence="1">
    <location>
        <position position="163"/>
    </location>
    <ligand>
        <name>substrate</name>
    </ligand>
</feature>
<feature type="binding site" evidence="1">
    <location>
        <begin position="187"/>
        <end position="189"/>
    </location>
    <ligand>
        <name>FAD</name>
        <dbReference type="ChEBI" id="CHEBI:57692"/>
    </ligand>
</feature>
<feature type="binding site" evidence="1">
    <location>
        <begin position="209"/>
        <end position="210"/>
    </location>
    <ligand>
        <name>substrate</name>
    </ligand>
</feature>
<feature type="binding site" evidence="1">
    <location>
        <position position="264"/>
    </location>
    <ligand>
        <name>substrate</name>
    </ligand>
</feature>
<feature type="binding site" evidence="1">
    <location>
        <begin position="271"/>
        <end position="274"/>
    </location>
    <ligand>
        <name>substrate</name>
    </ligand>
</feature>
<feature type="binding site" evidence="1">
    <location>
        <position position="299"/>
    </location>
    <ligand>
        <name>FAD</name>
        <dbReference type="ChEBI" id="CHEBI:57692"/>
    </ligand>
</feature>
<feature type="binding site" evidence="1">
    <location>
        <position position="310"/>
    </location>
    <ligand>
        <name>FAD</name>
        <dbReference type="ChEBI" id="CHEBI:57692"/>
    </ligand>
</feature>
<feature type="binding site" evidence="1">
    <location>
        <begin position="367"/>
        <end position="371"/>
    </location>
    <ligand>
        <name>FAD</name>
        <dbReference type="ChEBI" id="CHEBI:57692"/>
    </ligand>
</feature>
<feature type="binding site" evidence="1">
    <location>
        <begin position="394"/>
        <end position="395"/>
    </location>
    <ligand>
        <name>substrate</name>
    </ligand>
</feature>
<feature type="binding site" evidence="1">
    <location>
        <begin position="396"/>
        <end position="398"/>
    </location>
    <ligand>
        <name>FAD</name>
        <dbReference type="ChEBI" id="CHEBI:57692"/>
    </ligand>
</feature>
<feature type="sequence conflict" description="In Ref. 2; CAC08234." evidence="4" ref="2">
    <original>N</original>
    <variation>D</variation>
    <location>
        <position position="78"/>
    </location>
</feature>
<feature type="sequence conflict" description="In Ref. 2; CAC08234." evidence="4" ref="2">
    <original>N</original>
    <variation>D</variation>
    <location>
        <position position="160"/>
    </location>
</feature>
<feature type="sequence conflict" description="In Ref. 2; CAC08234." evidence="4" ref="2">
    <original>G</original>
    <variation>S</variation>
    <location>
        <position position="208"/>
    </location>
</feature>
<feature type="sequence conflict" description="In Ref. 2; CAC08234." evidence="4" ref="2">
    <original>R</original>
    <variation>K</variation>
    <location>
        <position position="261"/>
    </location>
</feature>
<organism>
    <name type="scientific">Solanum tuberosum</name>
    <name type="common">Potato</name>
    <dbReference type="NCBI Taxonomy" id="4113"/>
    <lineage>
        <taxon>Eukaryota</taxon>
        <taxon>Viridiplantae</taxon>
        <taxon>Streptophyta</taxon>
        <taxon>Embryophyta</taxon>
        <taxon>Tracheophyta</taxon>
        <taxon>Spermatophyta</taxon>
        <taxon>Magnoliopsida</taxon>
        <taxon>eudicotyledons</taxon>
        <taxon>Gunneridae</taxon>
        <taxon>Pentapetalae</taxon>
        <taxon>asterids</taxon>
        <taxon>lamiids</taxon>
        <taxon>Solanales</taxon>
        <taxon>Solanaceae</taxon>
        <taxon>Solanoideae</taxon>
        <taxon>Solaneae</taxon>
        <taxon>Solanum</taxon>
    </lineage>
</organism>
<gene>
    <name type="primary">IVD</name>
    <name type="synonym">IVD2</name>
    <name type="ORF">PGSC0003DMG400008113</name>
</gene>
<sequence>MHKLFVARSVKSALFRIKNHQKPQFAAFSTSLLFDDTQKQFKESVAQFAQENIAPHAEKIDRTNYFPQDVNLWKLMGNFNLLGITVPEEYGGLGLGYLYHCIAMEEISRASGSVGLSYGAHTNLCINQLVRNGTHEQKQKYLPKLISGEHVGALAMSEPNAGSDVVSMKCKADRVEGGYVLNGNKMWCTNGPTAQTLVVYAKTDVTAGSKGITAFIIEKGMTGFSTAQKLDKLGMRGSDTCELVFENCFVPEENVLGQVGRGVYVLMSGLDLERLVLASGPVGIMQACLDVVLPYVKQREQFGRPIGEFQFVQGKVADMYTSMQSSRSYLYSVARECDSGTINTKDCAGVILSAAERATQVALQAIQCLGGNGYVNEYPTGRFLRDAKLYEIGAGTSEIRRMIIGRELFKEQ</sequence>
<comment type="function">
    <text evidence="2 3">Involved in the catabolism of amino acids. Uses isovaleryl-CoA as substrate. Minor activity detected with 2-methylpalmitoyl-CoA or 2-methylbutanoyl-CoA, but no activity with short- and medium-straight chain acyl-CoA esters or with 2-methylhexanoyl-CoA.</text>
</comment>
<comment type="catalytic activity">
    <reaction evidence="2 3">
        <text>3-methylbutanoyl-CoA + oxidized [electron-transfer flavoprotein] + H(+) = 3-methylbut-2-enoyl-CoA + reduced [electron-transfer flavoprotein]</text>
        <dbReference type="Rhea" id="RHEA:12276"/>
        <dbReference type="Rhea" id="RHEA-COMP:10685"/>
        <dbReference type="Rhea" id="RHEA-COMP:10686"/>
        <dbReference type="ChEBI" id="CHEBI:15378"/>
        <dbReference type="ChEBI" id="CHEBI:57344"/>
        <dbReference type="ChEBI" id="CHEBI:57345"/>
        <dbReference type="ChEBI" id="CHEBI:57692"/>
        <dbReference type="ChEBI" id="CHEBI:58307"/>
        <dbReference type="EC" id="1.3.8.4"/>
    </reaction>
</comment>
<comment type="cofactor">
    <cofactor evidence="1">
        <name>FAD</name>
        <dbReference type="ChEBI" id="CHEBI:57692"/>
    </cofactor>
</comment>
<comment type="biophysicochemical properties">
    <kinetics>
        <KM evidence="3">1.3 uM for Isovaleryl-CoA</KM>
        <text>kcat is 0.98 sec(-1) per tetramer for Isovaleryl-CoA.</text>
    </kinetics>
</comment>
<comment type="pathway">
    <text>Amino-acid degradation; L-leucine degradation; (S)-3-hydroxy-3-methylglutaryl-CoA from 3-isovaleryl-CoA: step 1/3.</text>
</comment>
<comment type="subunit">
    <text evidence="3">Homotetramer.</text>
</comment>
<comment type="subcellular location">
    <subcellularLocation>
        <location evidence="2">Mitochondrion</location>
    </subcellularLocation>
</comment>
<comment type="tissue specificity">
    <text evidence="2">Expressed in flowers and tubers.</text>
</comment>
<comment type="miscellaneous">
    <text evidence="5">Was previously thought to be duplicated, but PubMed:15574432 showed that the protein encoded by the second gene (2MBCD) is a 2-methylbutanoyl-CoA dehydrogenase.</text>
</comment>
<comment type="similarity">
    <text evidence="4">Belongs to the acyl-CoA dehydrogenase family.</text>
</comment>
<reference key="1">
    <citation type="journal article" date="2011" name="Nature">
        <title>Genome sequence and analysis of the tuber crop potato.</title>
        <authorList>
            <consortium name="The Potato Genome Sequencing Consortium"/>
        </authorList>
    </citation>
    <scope>NUCLEOTIDE SEQUENCE [LARGE SCALE GENOMIC DNA]</scope>
    <source>
        <strain>cv. DM1-3 516 R44</strain>
    </source>
</reference>
<reference evidence="4" key="2">
    <citation type="journal article" date="2001" name="Eur. J. Biochem.">
        <title>Purification, characterization and cloning of isovaleryl-CoA dehydrogenase from higher plant mitochondria.</title>
        <authorList>
            <person name="Faivre-Nitschke S.E."/>
            <person name="Couee I."/>
            <person name="Vermel M."/>
            <person name="Grienenberger J.-M."/>
            <person name="Gualberto J.M."/>
        </authorList>
    </citation>
    <scope>NUCLEOTIDE SEQUENCE [MRNA] OF 12-412</scope>
    <scope>PROTEIN SEQUENCE OF 29-55</scope>
    <scope>FUNCTION</scope>
    <scope>CATALYTIC ACTIVITY</scope>
    <scope>SUBSTRATE SPECIFICITY</scope>
    <scope>SUBCELLULAR LOCATION</scope>
    <scope>TISSUE SPECIFICITY</scope>
    <source>
        <strain>cv. Bintje</strain>
        <tissue>Tuber</tissue>
    </source>
</reference>
<reference key="3">
    <citation type="journal article" date="2005" name="J. Biol. Chem.">
        <title>Convergent evolution of a 2-methylbutyryl-CoA dehydrogenase from isovaleryl-CoA dehydrogenase in Solanum tuberosum.</title>
        <authorList>
            <person name="Goetzman E.S."/>
            <person name="Mohsen A.W."/>
            <person name="Prasad K."/>
            <person name="Vockley J."/>
        </authorList>
    </citation>
    <scope>FUNCTION</scope>
    <scope>CATALYTIC ACTIVITY</scope>
    <scope>BIOPHYSICOCHEMICAL PROPERTIES</scope>
    <scope>SUBUNIT</scope>
</reference>
<proteinExistence type="evidence at protein level"/>
<accession>Q9FS87</accession>
<accession>M1AEC9</accession>